<feature type="chain" id="PRO_0000118317" description="NADH-ubiquinone oxidoreductase chain 6">
    <location>
        <begin position="1"/>
        <end position="221"/>
    </location>
</feature>
<feature type="transmembrane region" description="Helical" evidence="2">
    <location>
        <begin position="18"/>
        <end position="38"/>
    </location>
</feature>
<feature type="transmembrane region" description="Helical" evidence="2">
    <location>
        <begin position="44"/>
        <end position="64"/>
    </location>
</feature>
<feature type="transmembrane region" description="Helical" evidence="2">
    <location>
        <begin position="74"/>
        <end position="94"/>
    </location>
</feature>
<feature type="transmembrane region" description="Helical" evidence="2">
    <location>
        <begin position="107"/>
        <end position="127"/>
    </location>
</feature>
<feature type="transmembrane region" description="Helical" evidence="2">
    <location>
        <begin position="195"/>
        <end position="215"/>
    </location>
</feature>
<accession>P15959</accession>
<accession>P15561</accession>
<comment type="function">
    <text evidence="1">Core subunit of the mitochondrial membrane respiratory chain NADH dehydrogenase (Complex I) that is believed to belong to the minimal assembly required for catalysis. Complex I functions in the transfer of electrons from NADH to the respiratory chain. The immediate electron acceptor for the enzyme is believed to be ubiquinone (By similarity).</text>
</comment>
<comment type="catalytic activity">
    <reaction>
        <text>a ubiquinone + NADH + 5 H(+)(in) = a ubiquinol + NAD(+) + 4 H(+)(out)</text>
        <dbReference type="Rhea" id="RHEA:29091"/>
        <dbReference type="Rhea" id="RHEA-COMP:9565"/>
        <dbReference type="Rhea" id="RHEA-COMP:9566"/>
        <dbReference type="ChEBI" id="CHEBI:15378"/>
        <dbReference type="ChEBI" id="CHEBI:16389"/>
        <dbReference type="ChEBI" id="CHEBI:17976"/>
        <dbReference type="ChEBI" id="CHEBI:57540"/>
        <dbReference type="ChEBI" id="CHEBI:57945"/>
        <dbReference type="EC" id="7.1.1.2"/>
    </reaction>
</comment>
<comment type="subcellular location">
    <subcellularLocation>
        <location evidence="3">Mitochondrion membrane</location>
        <topology evidence="3">Multi-pass membrane protein</topology>
    </subcellularLocation>
</comment>
<comment type="similarity">
    <text evidence="3">Belongs to the complex I subunit 6 family.</text>
</comment>
<organism>
    <name type="scientific">Podospora anserina (strain S / ATCC MYA-4624 / DSM 980 / FGSC 10383)</name>
    <name type="common">Pleurage anserina</name>
    <dbReference type="NCBI Taxonomy" id="515849"/>
    <lineage>
        <taxon>Eukaryota</taxon>
        <taxon>Fungi</taxon>
        <taxon>Dikarya</taxon>
        <taxon>Ascomycota</taxon>
        <taxon>Pezizomycotina</taxon>
        <taxon>Sordariomycetes</taxon>
        <taxon>Sordariomycetidae</taxon>
        <taxon>Sordariales</taxon>
        <taxon>Podosporaceae</taxon>
        <taxon>Podospora</taxon>
        <taxon>Podospora anserina</taxon>
    </lineage>
</organism>
<protein>
    <recommendedName>
        <fullName>NADH-ubiquinone oxidoreductase chain 6</fullName>
        <ecNumber>7.1.1.2</ecNumber>
    </recommendedName>
    <alternativeName>
        <fullName>NADH dehydrogenase subunit 6</fullName>
    </alternativeName>
</protein>
<name>NU6M_PODAN</name>
<keyword id="KW-0249">Electron transport</keyword>
<keyword id="KW-0472">Membrane</keyword>
<keyword id="KW-0496">Mitochondrion</keyword>
<keyword id="KW-0520">NAD</keyword>
<keyword id="KW-1185">Reference proteome</keyword>
<keyword id="KW-0679">Respiratory chain</keyword>
<keyword id="KW-1278">Translocase</keyword>
<keyword id="KW-0812">Transmembrane</keyword>
<keyword id="KW-1133">Transmembrane helix</keyword>
<keyword id="KW-0813">Transport</keyword>
<keyword id="KW-0830">Ubiquinone</keyword>
<geneLocation type="mitochondrion"/>
<reference key="1">
    <citation type="journal article" date="1988" name="J. Mol. Biol.">
        <title>Sequence analysis of mitochondrial DNA from Podospora anserina. Pervasiveness of a class I intron in three separate genes.</title>
        <authorList>
            <person name="Cummings D.J."/>
            <person name="Domenico J.M."/>
        </authorList>
    </citation>
    <scope>NUCLEOTIDE SEQUENCE [GENOMIC DNA]</scope>
    <source>
        <strain>A</strain>
        <strain>s</strain>
    </source>
</reference>
<reference key="2">
    <citation type="journal article" date="1990" name="Curr. Genet.">
        <title>The complete DNA sequence of the mitochondrial genome of Podospora anserina.</title>
        <authorList>
            <person name="Cummings D.J."/>
            <person name="McNally K.L."/>
            <person name="Domenico J.M."/>
            <person name="Matsuura E.T."/>
        </authorList>
    </citation>
    <scope>NUCLEOTIDE SEQUENCE [LARGE SCALE GENOMIC DNA]</scope>
    <source>
        <strain>s</strain>
    </source>
</reference>
<dbReference type="EC" id="7.1.1.2"/>
<dbReference type="EMBL" id="X55026">
    <property type="protein sequence ID" value="CAA38769.1"/>
    <property type="molecule type" value="Genomic_DNA"/>
</dbReference>
<dbReference type="EMBL" id="X14486">
    <property type="protein sequence ID" value="CAA32648.1"/>
    <property type="molecule type" value="Genomic_DNA"/>
</dbReference>
<dbReference type="PIR" id="S02156">
    <property type="entry name" value="S02156"/>
</dbReference>
<dbReference type="SMR" id="P15959"/>
<dbReference type="STRING" id="515849.P15959"/>
<dbReference type="TCDB" id="3.D.1.6.2">
    <property type="family name" value="the h+ or na+-translocating nadh dehydrogenase (ndh) family"/>
</dbReference>
<dbReference type="KEGG" id="pan:PoanfMp08"/>
<dbReference type="InParanoid" id="P15959"/>
<dbReference type="Proteomes" id="UP000001197">
    <property type="component" value="Mitochondrion"/>
</dbReference>
<dbReference type="GO" id="GO:0031966">
    <property type="term" value="C:mitochondrial membrane"/>
    <property type="evidence" value="ECO:0007669"/>
    <property type="project" value="UniProtKB-SubCell"/>
</dbReference>
<dbReference type="GO" id="GO:0008137">
    <property type="term" value="F:NADH dehydrogenase (ubiquinone) activity"/>
    <property type="evidence" value="ECO:0007669"/>
    <property type="project" value="UniProtKB-EC"/>
</dbReference>
<dbReference type="Gene3D" id="1.20.120.1200">
    <property type="entry name" value="NADH-ubiquinone/plastoquinone oxidoreductase chain 6, subunit NuoJ"/>
    <property type="match status" value="1"/>
</dbReference>
<dbReference type="InterPro" id="IPR001457">
    <property type="entry name" value="NADH_UbQ/plastoQ_OxRdtase_su6"/>
</dbReference>
<dbReference type="InterPro" id="IPR042106">
    <property type="entry name" value="Nuo/plastoQ_OxRdtase_6_NuoJ"/>
</dbReference>
<dbReference type="PANTHER" id="PTHR33269">
    <property type="entry name" value="NADH-UBIQUINONE OXIDOREDUCTASE CHAIN 6"/>
    <property type="match status" value="1"/>
</dbReference>
<dbReference type="PANTHER" id="PTHR33269:SF17">
    <property type="entry name" value="NADH-UBIQUINONE OXIDOREDUCTASE CHAIN 6"/>
    <property type="match status" value="1"/>
</dbReference>
<dbReference type="Pfam" id="PF00499">
    <property type="entry name" value="Oxidored_q3"/>
    <property type="match status" value="1"/>
</dbReference>
<gene>
    <name type="primary">ND6</name>
</gene>
<sequence>MNNNYPLFWINEILTNGFVEYILDIFSIMAFLTGIYVILTKNPIVSVLFLILLFGGISSYLNIIGLNFIGLSYIIVYIGAVSILFLFILMLINIRTSELQSNTSNSIPLTIFIGIIFSNFLFPMLPYDIVMLSNFYNNYFSEDFYTIDVNINDNNLNNLYNNVLYFMTSVIWDGSVIDFNHITAIGNIMYTIYNIWLIIASFILLLAMVGSIVITIKQRKI</sequence>
<proteinExistence type="inferred from homology"/>
<evidence type="ECO:0000250" key="1"/>
<evidence type="ECO:0000255" key="2"/>
<evidence type="ECO:0000305" key="3"/>